<reference key="1">
    <citation type="journal article" date="2011" name="J. Bacteriol.">
        <title>Whole-genome sequences of thirteen isolates of Borrelia burgdorferi.</title>
        <authorList>
            <person name="Schutzer S.E."/>
            <person name="Fraser-Liggett C.M."/>
            <person name="Casjens S.R."/>
            <person name="Qiu W.G."/>
            <person name="Dunn J.J."/>
            <person name="Mongodin E.F."/>
            <person name="Luft B.J."/>
        </authorList>
    </citation>
    <scope>NUCLEOTIDE SEQUENCE [LARGE SCALE GENOMIC DNA]</scope>
    <source>
        <strain>ZS7</strain>
    </source>
</reference>
<organism>
    <name type="scientific">Borreliella burgdorferi (strain ZS7)</name>
    <name type="common">Borrelia burgdorferi</name>
    <dbReference type="NCBI Taxonomy" id="445985"/>
    <lineage>
        <taxon>Bacteria</taxon>
        <taxon>Pseudomonadati</taxon>
        <taxon>Spirochaetota</taxon>
        <taxon>Spirochaetia</taxon>
        <taxon>Spirochaetales</taxon>
        <taxon>Borreliaceae</taxon>
        <taxon>Borreliella</taxon>
    </lineage>
</organism>
<protein>
    <recommendedName>
        <fullName evidence="1">Probable transcriptional regulatory protein BbuZS7_0025</fullName>
    </recommendedName>
</protein>
<sequence length="243" mass="27034">MSGHSKWSTIKRKKGALDAKRNKIFTKLIREITIAAKIGGGDIESNPRLRVAVNKAKVANMPKDNIEKAIKKGIGGNEGVEYFEITYEAYAPYGVALMIKCLTDNKNRTSSDVKSVLAKGGGSLGTPGSVSYMFYRKGLIVYNLEKYLEDEIMEFALEVGAEDILVSNNEAEVITSPDDFDKVLSFLKTKFKEEVAEIALIPENKISLNKDQAEKIILLVEKLEDFDDVQEVIHNLEIPEELS</sequence>
<evidence type="ECO:0000255" key="1">
    <source>
        <dbReference type="HAMAP-Rule" id="MF_00693"/>
    </source>
</evidence>
<feature type="chain" id="PRO_1000132157" description="Probable transcriptional regulatory protein BbuZS7_0025">
    <location>
        <begin position="1"/>
        <end position="243"/>
    </location>
</feature>
<comment type="subcellular location">
    <subcellularLocation>
        <location evidence="1">Cytoplasm</location>
    </subcellularLocation>
</comment>
<comment type="similarity">
    <text evidence="1">Belongs to the TACO1 family.</text>
</comment>
<accession>B7J0W4</accession>
<gene>
    <name type="ordered locus">BbuZS7_0025</name>
</gene>
<keyword id="KW-0963">Cytoplasm</keyword>
<keyword id="KW-0238">DNA-binding</keyword>
<keyword id="KW-0804">Transcription</keyword>
<keyword id="KW-0805">Transcription regulation</keyword>
<dbReference type="EMBL" id="CP001205">
    <property type="protein sequence ID" value="ACK74542.1"/>
    <property type="molecule type" value="Genomic_DNA"/>
</dbReference>
<dbReference type="RefSeq" id="WP_002556631.1">
    <property type="nucleotide sequence ID" value="NC_011728.1"/>
</dbReference>
<dbReference type="SMR" id="B7J0W4"/>
<dbReference type="KEGG" id="bbz:BbuZS7_0025"/>
<dbReference type="HOGENOM" id="CLU_062974_2_2_12"/>
<dbReference type="Proteomes" id="UP000006901">
    <property type="component" value="Chromosome"/>
</dbReference>
<dbReference type="GO" id="GO:0005829">
    <property type="term" value="C:cytosol"/>
    <property type="evidence" value="ECO:0007669"/>
    <property type="project" value="TreeGrafter"/>
</dbReference>
<dbReference type="GO" id="GO:0003677">
    <property type="term" value="F:DNA binding"/>
    <property type="evidence" value="ECO:0007669"/>
    <property type="project" value="UniProtKB-UniRule"/>
</dbReference>
<dbReference type="GO" id="GO:0006355">
    <property type="term" value="P:regulation of DNA-templated transcription"/>
    <property type="evidence" value="ECO:0007669"/>
    <property type="project" value="UniProtKB-UniRule"/>
</dbReference>
<dbReference type="FunFam" id="1.10.10.200:FF:000002">
    <property type="entry name" value="Probable transcriptional regulatory protein CLM62_37755"/>
    <property type="match status" value="1"/>
</dbReference>
<dbReference type="Gene3D" id="1.10.10.200">
    <property type="match status" value="1"/>
</dbReference>
<dbReference type="Gene3D" id="3.30.70.980">
    <property type="match status" value="2"/>
</dbReference>
<dbReference type="HAMAP" id="MF_00693">
    <property type="entry name" value="Transcrip_reg_TACO1"/>
    <property type="match status" value="1"/>
</dbReference>
<dbReference type="InterPro" id="IPR017856">
    <property type="entry name" value="Integrase-like_N"/>
</dbReference>
<dbReference type="InterPro" id="IPR048300">
    <property type="entry name" value="TACO1_YebC-like_2nd/3rd_dom"/>
</dbReference>
<dbReference type="InterPro" id="IPR049083">
    <property type="entry name" value="TACO1_YebC_N"/>
</dbReference>
<dbReference type="InterPro" id="IPR002876">
    <property type="entry name" value="Transcrip_reg_TACO1-like"/>
</dbReference>
<dbReference type="InterPro" id="IPR026564">
    <property type="entry name" value="Transcrip_reg_TACO1-like_dom3"/>
</dbReference>
<dbReference type="InterPro" id="IPR029072">
    <property type="entry name" value="YebC-like"/>
</dbReference>
<dbReference type="NCBIfam" id="NF001030">
    <property type="entry name" value="PRK00110.1"/>
    <property type="match status" value="1"/>
</dbReference>
<dbReference type="NCBIfam" id="NF009044">
    <property type="entry name" value="PRK12378.1"/>
    <property type="match status" value="1"/>
</dbReference>
<dbReference type="NCBIfam" id="TIGR01033">
    <property type="entry name" value="YebC/PmpR family DNA-binding transcriptional regulator"/>
    <property type="match status" value="1"/>
</dbReference>
<dbReference type="PANTHER" id="PTHR12532:SF6">
    <property type="entry name" value="TRANSCRIPTIONAL REGULATORY PROTEIN YEBC-RELATED"/>
    <property type="match status" value="1"/>
</dbReference>
<dbReference type="PANTHER" id="PTHR12532">
    <property type="entry name" value="TRANSLATIONAL ACTIVATOR OF CYTOCHROME C OXIDASE 1"/>
    <property type="match status" value="1"/>
</dbReference>
<dbReference type="Pfam" id="PF20772">
    <property type="entry name" value="TACO1_YebC_N"/>
    <property type="match status" value="1"/>
</dbReference>
<dbReference type="Pfam" id="PF01709">
    <property type="entry name" value="Transcrip_reg"/>
    <property type="match status" value="1"/>
</dbReference>
<dbReference type="SUPFAM" id="SSF75625">
    <property type="entry name" value="YebC-like"/>
    <property type="match status" value="1"/>
</dbReference>
<proteinExistence type="inferred from homology"/>
<name>Y025_BORBZ</name>